<gene>
    <name evidence="1" type="primary">glpE</name>
    <name type="ordered locus">STM3525</name>
</gene>
<proteinExistence type="inferred from homology"/>
<reference key="1">
    <citation type="journal article" date="2001" name="Nature">
        <title>Complete genome sequence of Salmonella enterica serovar Typhimurium LT2.</title>
        <authorList>
            <person name="McClelland M."/>
            <person name="Sanderson K.E."/>
            <person name="Spieth J."/>
            <person name="Clifton S.W."/>
            <person name="Latreille P."/>
            <person name="Courtney L."/>
            <person name="Porwollik S."/>
            <person name="Ali J."/>
            <person name="Dante M."/>
            <person name="Du F."/>
            <person name="Hou S."/>
            <person name="Layman D."/>
            <person name="Leonard S."/>
            <person name="Nguyen C."/>
            <person name="Scott K."/>
            <person name="Holmes A."/>
            <person name="Grewal N."/>
            <person name="Mulvaney E."/>
            <person name="Ryan E."/>
            <person name="Sun H."/>
            <person name="Florea L."/>
            <person name="Miller W."/>
            <person name="Stoneking T."/>
            <person name="Nhan M."/>
            <person name="Waterston R."/>
            <person name="Wilson R.K."/>
        </authorList>
    </citation>
    <scope>NUCLEOTIDE SEQUENCE [LARGE SCALE GENOMIC DNA]</scope>
    <source>
        <strain>LT2 / SGSC1412 / ATCC 700720</strain>
    </source>
</reference>
<dbReference type="EC" id="2.8.1.1" evidence="1"/>
<dbReference type="EMBL" id="AE006468">
    <property type="protein sequence ID" value="AAL22386.1"/>
    <property type="molecule type" value="Genomic_DNA"/>
</dbReference>
<dbReference type="RefSeq" id="NP_462427.1">
    <property type="nucleotide sequence ID" value="NC_003197.2"/>
</dbReference>
<dbReference type="RefSeq" id="WP_000434523.1">
    <property type="nucleotide sequence ID" value="NC_003197.2"/>
</dbReference>
<dbReference type="SMR" id="P64251"/>
<dbReference type="STRING" id="99287.STM3525"/>
<dbReference type="PaxDb" id="99287-STM3525"/>
<dbReference type="GeneID" id="1255048"/>
<dbReference type="KEGG" id="stm:STM3525"/>
<dbReference type="PATRIC" id="fig|99287.12.peg.3726"/>
<dbReference type="HOGENOM" id="CLU_089574_14_0_6"/>
<dbReference type="OMA" id="VCYHGIS"/>
<dbReference type="PhylomeDB" id="P64251"/>
<dbReference type="BioCyc" id="SENT99287:STM3525-MONOMER"/>
<dbReference type="Proteomes" id="UP000001014">
    <property type="component" value="Chromosome"/>
</dbReference>
<dbReference type="GO" id="GO:0005737">
    <property type="term" value="C:cytoplasm"/>
    <property type="evidence" value="ECO:0007669"/>
    <property type="project" value="UniProtKB-SubCell"/>
</dbReference>
<dbReference type="GO" id="GO:0004792">
    <property type="term" value="F:thiosulfate-cyanide sulfurtransferase activity"/>
    <property type="evidence" value="ECO:0007669"/>
    <property type="project" value="UniProtKB-UniRule"/>
</dbReference>
<dbReference type="GO" id="GO:0006071">
    <property type="term" value="P:glycerol metabolic process"/>
    <property type="evidence" value="ECO:0007669"/>
    <property type="project" value="UniProtKB-UniRule"/>
</dbReference>
<dbReference type="CDD" id="cd01444">
    <property type="entry name" value="GlpE_ST"/>
    <property type="match status" value="1"/>
</dbReference>
<dbReference type="FunFam" id="3.40.250.10:FF:000007">
    <property type="entry name" value="Thiosulfate sulfurtransferase GlpE"/>
    <property type="match status" value="1"/>
</dbReference>
<dbReference type="Gene3D" id="3.40.250.10">
    <property type="entry name" value="Rhodanese-like domain"/>
    <property type="match status" value="1"/>
</dbReference>
<dbReference type="HAMAP" id="MF_01009">
    <property type="entry name" value="Thiosulf_sulfurtr"/>
    <property type="match status" value="1"/>
</dbReference>
<dbReference type="InterPro" id="IPR050229">
    <property type="entry name" value="GlpE_sulfurtransferase"/>
</dbReference>
<dbReference type="InterPro" id="IPR001763">
    <property type="entry name" value="Rhodanese-like_dom"/>
</dbReference>
<dbReference type="InterPro" id="IPR036873">
    <property type="entry name" value="Rhodanese-like_dom_sf"/>
</dbReference>
<dbReference type="InterPro" id="IPR023695">
    <property type="entry name" value="Thiosulf_sulfurTrfase"/>
</dbReference>
<dbReference type="NCBIfam" id="NF001195">
    <property type="entry name" value="PRK00162.1"/>
    <property type="match status" value="1"/>
</dbReference>
<dbReference type="PANTHER" id="PTHR43031">
    <property type="entry name" value="FAD-DEPENDENT OXIDOREDUCTASE"/>
    <property type="match status" value="1"/>
</dbReference>
<dbReference type="PANTHER" id="PTHR43031:SF6">
    <property type="entry name" value="THIOSULFATE SULFURTRANSFERASE GLPE"/>
    <property type="match status" value="1"/>
</dbReference>
<dbReference type="Pfam" id="PF00581">
    <property type="entry name" value="Rhodanese"/>
    <property type="match status" value="1"/>
</dbReference>
<dbReference type="SMART" id="SM00450">
    <property type="entry name" value="RHOD"/>
    <property type="match status" value="1"/>
</dbReference>
<dbReference type="SUPFAM" id="SSF52821">
    <property type="entry name" value="Rhodanese/Cell cycle control phosphatase"/>
    <property type="match status" value="1"/>
</dbReference>
<dbReference type="PROSITE" id="PS50206">
    <property type="entry name" value="RHODANESE_3"/>
    <property type="match status" value="1"/>
</dbReference>
<organism>
    <name type="scientific">Salmonella typhimurium (strain LT2 / SGSC1412 / ATCC 700720)</name>
    <dbReference type="NCBI Taxonomy" id="99287"/>
    <lineage>
        <taxon>Bacteria</taxon>
        <taxon>Pseudomonadati</taxon>
        <taxon>Pseudomonadota</taxon>
        <taxon>Gammaproteobacteria</taxon>
        <taxon>Enterobacterales</taxon>
        <taxon>Enterobacteriaceae</taxon>
        <taxon>Salmonella</taxon>
    </lineage>
</organism>
<accession>P64251</accession>
<accession>Q8XFC6</accession>
<evidence type="ECO:0000255" key="1">
    <source>
        <dbReference type="HAMAP-Rule" id="MF_01009"/>
    </source>
</evidence>
<keyword id="KW-0963">Cytoplasm</keyword>
<keyword id="KW-1185">Reference proteome</keyword>
<keyword id="KW-0808">Transferase</keyword>
<comment type="function">
    <text evidence="1">Transferase that catalyzes the transfer of sulfur from thiosulfate to thiophilic acceptors such as cyanide or dithiols. May function in a CysM-independent thiosulfate assimilation pathway by catalyzing the conversion of thiosulfate to sulfite, which can then be used for L-cysteine biosynthesis.</text>
</comment>
<comment type="catalytic activity">
    <reaction evidence="1">
        <text>thiosulfate + hydrogen cyanide = thiocyanate + sulfite + 2 H(+)</text>
        <dbReference type="Rhea" id="RHEA:16881"/>
        <dbReference type="ChEBI" id="CHEBI:15378"/>
        <dbReference type="ChEBI" id="CHEBI:17359"/>
        <dbReference type="ChEBI" id="CHEBI:18022"/>
        <dbReference type="ChEBI" id="CHEBI:18407"/>
        <dbReference type="ChEBI" id="CHEBI:33542"/>
        <dbReference type="EC" id="2.8.1.1"/>
    </reaction>
</comment>
<comment type="catalytic activity">
    <reaction evidence="1">
        <text>thiosulfate + [thioredoxin]-dithiol = [thioredoxin]-disulfide + hydrogen sulfide + sulfite + 2 H(+)</text>
        <dbReference type="Rhea" id="RHEA:83859"/>
        <dbReference type="Rhea" id="RHEA-COMP:10698"/>
        <dbReference type="Rhea" id="RHEA-COMP:10700"/>
        <dbReference type="ChEBI" id="CHEBI:15378"/>
        <dbReference type="ChEBI" id="CHEBI:17359"/>
        <dbReference type="ChEBI" id="CHEBI:29919"/>
        <dbReference type="ChEBI" id="CHEBI:29950"/>
        <dbReference type="ChEBI" id="CHEBI:33542"/>
        <dbReference type="ChEBI" id="CHEBI:50058"/>
    </reaction>
</comment>
<comment type="subcellular location">
    <subcellularLocation>
        <location evidence="1">Cytoplasm</location>
    </subcellularLocation>
</comment>
<comment type="similarity">
    <text evidence="1">Belongs to the GlpE family.</text>
</comment>
<protein>
    <recommendedName>
        <fullName evidence="1">Thiosulfate sulfurtransferase GlpE</fullName>
        <ecNumber evidence="1">2.8.1.1</ecNumber>
    </recommendedName>
</protein>
<sequence length="108" mass="11973">MEQFECITVEEAYQKLHQGAAVLVDIRDPQSYAMGHAPQAFHLTNDTLGAFMREHGFDTAVMVMCYHGNSSKGAAQYLLQQGYDAVYSIDGGFEAWHRRFPADVANGA</sequence>
<name>GLPE_SALTY</name>
<feature type="chain" id="PRO_0000200563" description="Thiosulfate sulfurtransferase GlpE">
    <location>
        <begin position="1"/>
        <end position="108"/>
    </location>
</feature>
<feature type="domain" description="Rhodanese" evidence="1">
    <location>
        <begin position="17"/>
        <end position="105"/>
    </location>
</feature>
<feature type="active site" description="Cysteine persulfide intermediate" evidence="1">
    <location>
        <position position="65"/>
    </location>
</feature>